<comment type="function">
    <text evidence="1">PPIases accelerate the folding of proteins. It catalyzes the cis-trans isomerization of proline imidic peptide bonds in oligopeptides (By similarity).</text>
</comment>
<comment type="catalytic activity">
    <reaction>
        <text>[protein]-peptidylproline (omega=180) = [protein]-peptidylproline (omega=0)</text>
        <dbReference type="Rhea" id="RHEA:16237"/>
        <dbReference type="Rhea" id="RHEA-COMP:10747"/>
        <dbReference type="Rhea" id="RHEA-COMP:10748"/>
        <dbReference type="ChEBI" id="CHEBI:83833"/>
        <dbReference type="ChEBI" id="CHEBI:83834"/>
        <dbReference type="EC" id="5.2.1.8"/>
    </reaction>
</comment>
<comment type="subcellular location">
    <subcellularLocation>
        <location evidence="3">Cytoplasm</location>
        <location evidence="3">Cytoskeleton</location>
        <location evidence="3">Microtubule organizing center</location>
        <location evidence="3">Spindle pole body</location>
    </subcellularLocation>
</comment>
<comment type="similarity">
    <text evidence="4">Belongs to the cyclophilin-type PPIase family. PPIase H subfamily.</text>
</comment>
<name>PPIH_SCHPO</name>
<organism>
    <name type="scientific">Schizosaccharomyces pombe (strain 972 / ATCC 24843)</name>
    <name type="common">Fission yeast</name>
    <dbReference type="NCBI Taxonomy" id="284812"/>
    <lineage>
        <taxon>Eukaryota</taxon>
        <taxon>Fungi</taxon>
        <taxon>Dikarya</taxon>
        <taxon>Ascomycota</taxon>
        <taxon>Taphrinomycotina</taxon>
        <taxon>Schizosaccharomycetes</taxon>
        <taxon>Schizosaccharomycetales</taxon>
        <taxon>Schizosaccharomycetaceae</taxon>
        <taxon>Schizosaccharomyces</taxon>
    </lineage>
</organism>
<sequence length="173" mass="18906">MSTEPVVFMDIAIDGRLLGRIKIRLFSSIVPKTAENFRQFCTGETLGVNQKPIGYKNSTFHRIIQGFMIQGGDFVSGDGTGSATIFNSRTFPDENFTLKHDRPGLLSMANAGKDSNGCQFFITTVPCDFLDGKHVVFGEVIEGYDIVKEIESTPVGANSRPKSNVAIVECGEM</sequence>
<accession>O74729</accession>
<dbReference type="EC" id="5.2.1.8"/>
<dbReference type="EMBL" id="CU329671">
    <property type="protein sequence ID" value="CAA21243.1"/>
    <property type="molecule type" value="Genomic_DNA"/>
</dbReference>
<dbReference type="PIR" id="T39632">
    <property type="entry name" value="T39632"/>
</dbReference>
<dbReference type="RefSeq" id="NP_595437.1">
    <property type="nucleotide sequence ID" value="NM_001021345.2"/>
</dbReference>
<dbReference type="SMR" id="O74729"/>
<dbReference type="BioGRID" id="276731">
    <property type="interactions" value="19"/>
</dbReference>
<dbReference type="FunCoup" id="O74729">
    <property type="interactions" value="983"/>
</dbReference>
<dbReference type="STRING" id="284812.O74729"/>
<dbReference type="PaxDb" id="4896-SPBC1709.04c.1"/>
<dbReference type="EnsemblFungi" id="SPBC1709.04c.1">
    <property type="protein sequence ID" value="SPBC1709.04c.1:pep"/>
    <property type="gene ID" value="SPBC1709.04c"/>
</dbReference>
<dbReference type="GeneID" id="2540198"/>
<dbReference type="KEGG" id="spo:2540198"/>
<dbReference type="PomBase" id="SPBC1709.04c">
    <property type="gene designation" value="cyp3"/>
</dbReference>
<dbReference type="VEuPathDB" id="FungiDB:SPBC1709.04c"/>
<dbReference type="eggNOG" id="KOG0879">
    <property type="taxonomic scope" value="Eukaryota"/>
</dbReference>
<dbReference type="HOGENOM" id="CLU_012062_4_3_1"/>
<dbReference type="InParanoid" id="O74729"/>
<dbReference type="OMA" id="CVSIYGH"/>
<dbReference type="PhylomeDB" id="O74729"/>
<dbReference type="PRO" id="PR:O74729"/>
<dbReference type="Proteomes" id="UP000002485">
    <property type="component" value="Chromosome II"/>
</dbReference>
<dbReference type="GO" id="GO:0005737">
    <property type="term" value="C:cytoplasm"/>
    <property type="evidence" value="ECO:0000318"/>
    <property type="project" value="GO_Central"/>
</dbReference>
<dbReference type="GO" id="GO:0005829">
    <property type="term" value="C:cytosol"/>
    <property type="evidence" value="ECO:0007005"/>
    <property type="project" value="PomBase"/>
</dbReference>
<dbReference type="GO" id="GO:0043231">
    <property type="term" value="C:intracellular membrane-bounded organelle"/>
    <property type="evidence" value="ECO:0000318"/>
    <property type="project" value="GO_Central"/>
</dbReference>
<dbReference type="GO" id="GO:0005634">
    <property type="term" value="C:nucleus"/>
    <property type="evidence" value="ECO:0000314"/>
    <property type="project" value="PomBase"/>
</dbReference>
<dbReference type="GO" id="GO:0005816">
    <property type="term" value="C:spindle pole body"/>
    <property type="evidence" value="ECO:0007669"/>
    <property type="project" value="UniProtKB-SubCell"/>
</dbReference>
<dbReference type="GO" id="GO:0016018">
    <property type="term" value="F:cyclosporin A binding"/>
    <property type="evidence" value="ECO:0000318"/>
    <property type="project" value="GO_Central"/>
</dbReference>
<dbReference type="GO" id="GO:0003755">
    <property type="term" value="F:peptidyl-prolyl cis-trans isomerase activity"/>
    <property type="evidence" value="ECO:0000314"/>
    <property type="project" value="PomBase"/>
</dbReference>
<dbReference type="GO" id="GO:0045292">
    <property type="term" value="P:mRNA cis splicing, via spliceosome"/>
    <property type="evidence" value="ECO:0000250"/>
    <property type="project" value="PomBase"/>
</dbReference>
<dbReference type="GO" id="GO:0006457">
    <property type="term" value="P:protein folding"/>
    <property type="evidence" value="ECO:0000318"/>
    <property type="project" value="GO_Central"/>
</dbReference>
<dbReference type="CDD" id="cd01926">
    <property type="entry name" value="cyclophilin_ABH_like"/>
    <property type="match status" value="1"/>
</dbReference>
<dbReference type="FunFam" id="2.40.100.10:FF:000035">
    <property type="entry name" value="Peptidyl-prolyl cis-trans isomerase"/>
    <property type="match status" value="1"/>
</dbReference>
<dbReference type="Gene3D" id="2.40.100.10">
    <property type="entry name" value="Cyclophilin-like"/>
    <property type="match status" value="1"/>
</dbReference>
<dbReference type="InterPro" id="IPR029000">
    <property type="entry name" value="Cyclophilin-like_dom_sf"/>
</dbReference>
<dbReference type="InterPro" id="IPR024936">
    <property type="entry name" value="Cyclophilin-type_PPIase"/>
</dbReference>
<dbReference type="InterPro" id="IPR020892">
    <property type="entry name" value="Cyclophilin-type_PPIase_CS"/>
</dbReference>
<dbReference type="InterPro" id="IPR002130">
    <property type="entry name" value="Cyclophilin-type_PPIase_dom"/>
</dbReference>
<dbReference type="PANTHER" id="PTHR11071">
    <property type="entry name" value="PEPTIDYL-PROLYL CIS-TRANS ISOMERASE"/>
    <property type="match status" value="1"/>
</dbReference>
<dbReference type="PANTHER" id="PTHR11071:SF561">
    <property type="entry name" value="PEPTIDYL-PROLYL CIS-TRANS ISOMERASE D-RELATED"/>
    <property type="match status" value="1"/>
</dbReference>
<dbReference type="Pfam" id="PF00160">
    <property type="entry name" value="Pro_isomerase"/>
    <property type="match status" value="1"/>
</dbReference>
<dbReference type="PIRSF" id="PIRSF001467">
    <property type="entry name" value="Peptidylpro_ismrse"/>
    <property type="match status" value="1"/>
</dbReference>
<dbReference type="PRINTS" id="PR00153">
    <property type="entry name" value="CSAPPISMRASE"/>
</dbReference>
<dbReference type="SUPFAM" id="SSF50891">
    <property type="entry name" value="Cyclophilin-like"/>
    <property type="match status" value="1"/>
</dbReference>
<dbReference type="PROSITE" id="PS00170">
    <property type="entry name" value="CSA_PPIASE_1"/>
    <property type="match status" value="1"/>
</dbReference>
<dbReference type="PROSITE" id="PS50072">
    <property type="entry name" value="CSA_PPIASE_2"/>
    <property type="match status" value="1"/>
</dbReference>
<keyword id="KW-0963">Cytoplasm</keyword>
<keyword id="KW-0206">Cytoskeleton</keyword>
<keyword id="KW-0413">Isomerase</keyword>
<keyword id="KW-1185">Reference proteome</keyword>
<keyword id="KW-0697">Rotamase</keyword>
<protein>
    <recommendedName>
        <fullName>Peptidyl-prolyl cis-trans isomerase cyp3</fullName>
        <shortName>PPIase cyp3</shortName>
        <ecNumber>5.2.1.8</ecNumber>
    </recommendedName>
    <alternativeName>
        <fullName>Rotamase cyp3</fullName>
    </alternativeName>
</protein>
<feature type="chain" id="PRO_0000232959" description="Peptidyl-prolyl cis-trans isomerase cyp3">
    <location>
        <begin position="1"/>
        <end position="173"/>
    </location>
</feature>
<feature type="domain" description="PPIase cyclophilin-type" evidence="2">
    <location>
        <begin position="8"/>
        <end position="172"/>
    </location>
</feature>
<evidence type="ECO:0000250" key="1"/>
<evidence type="ECO:0000255" key="2">
    <source>
        <dbReference type="PROSITE-ProRule" id="PRU00156"/>
    </source>
</evidence>
<evidence type="ECO:0000269" key="3">
    <source>
    </source>
</evidence>
<evidence type="ECO:0000305" key="4"/>
<reference key="1">
    <citation type="journal article" date="2002" name="Nature">
        <title>The genome sequence of Schizosaccharomyces pombe.</title>
        <authorList>
            <person name="Wood V."/>
            <person name="Gwilliam R."/>
            <person name="Rajandream M.A."/>
            <person name="Lyne M.H."/>
            <person name="Lyne R."/>
            <person name="Stewart A."/>
            <person name="Sgouros J.G."/>
            <person name="Peat N."/>
            <person name="Hayles J."/>
            <person name="Baker S.G."/>
            <person name="Basham D."/>
            <person name="Bowman S."/>
            <person name="Brooks K."/>
            <person name="Brown D."/>
            <person name="Brown S."/>
            <person name="Chillingworth T."/>
            <person name="Churcher C.M."/>
            <person name="Collins M."/>
            <person name="Connor R."/>
            <person name="Cronin A."/>
            <person name="Davis P."/>
            <person name="Feltwell T."/>
            <person name="Fraser A."/>
            <person name="Gentles S."/>
            <person name="Goble A."/>
            <person name="Hamlin N."/>
            <person name="Harris D.E."/>
            <person name="Hidalgo J."/>
            <person name="Hodgson G."/>
            <person name="Holroyd S."/>
            <person name="Hornsby T."/>
            <person name="Howarth S."/>
            <person name="Huckle E.J."/>
            <person name="Hunt S."/>
            <person name="Jagels K."/>
            <person name="James K.D."/>
            <person name="Jones L."/>
            <person name="Jones M."/>
            <person name="Leather S."/>
            <person name="McDonald S."/>
            <person name="McLean J."/>
            <person name="Mooney P."/>
            <person name="Moule S."/>
            <person name="Mungall K.L."/>
            <person name="Murphy L.D."/>
            <person name="Niblett D."/>
            <person name="Odell C."/>
            <person name="Oliver K."/>
            <person name="O'Neil S."/>
            <person name="Pearson D."/>
            <person name="Quail M.A."/>
            <person name="Rabbinowitsch E."/>
            <person name="Rutherford K.M."/>
            <person name="Rutter S."/>
            <person name="Saunders D."/>
            <person name="Seeger K."/>
            <person name="Sharp S."/>
            <person name="Skelton J."/>
            <person name="Simmonds M.N."/>
            <person name="Squares R."/>
            <person name="Squares S."/>
            <person name="Stevens K."/>
            <person name="Taylor K."/>
            <person name="Taylor R.G."/>
            <person name="Tivey A."/>
            <person name="Walsh S.V."/>
            <person name="Warren T."/>
            <person name="Whitehead S."/>
            <person name="Woodward J.R."/>
            <person name="Volckaert G."/>
            <person name="Aert R."/>
            <person name="Robben J."/>
            <person name="Grymonprez B."/>
            <person name="Weltjens I."/>
            <person name="Vanstreels E."/>
            <person name="Rieger M."/>
            <person name="Schaefer M."/>
            <person name="Mueller-Auer S."/>
            <person name="Gabel C."/>
            <person name="Fuchs M."/>
            <person name="Duesterhoeft A."/>
            <person name="Fritzc C."/>
            <person name="Holzer E."/>
            <person name="Moestl D."/>
            <person name="Hilbert H."/>
            <person name="Borzym K."/>
            <person name="Langer I."/>
            <person name="Beck A."/>
            <person name="Lehrach H."/>
            <person name="Reinhardt R."/>
            <person name="Pohl T.M."/>
            <person name="Eger P."/>
            <person name="Zimmermann W."/>
            <person name="Wedler H."/>
            <person name="Wambutt R."/>
            <person name="Purnelle B."/>
            <person name="Goffeau A."/>
            <person name="Cadieu E."/>
            <person name="Dreano S."/>
            <person name="Gloux S."/>
            <person name="Lelaure V."/>
            <person name="Mottier S."/>
            <person name="Galibert F."/>
            <person name="Aves S.J."/>
            <person name="Xiang Z."/>
            <person name="Hunt C."/>
            <person name="Moore K."/>
            <person name="Hurst S.M."/>
            <person name="Lucas M."/>
            <person name="Rochet M."/>
            <person name="Gaillardin C."/>
            <person name="Tallada V.A."/>
            <person name="Garzon A."/>
            <person name="Thode G."/>
            <person name="Daga R.R."/>
            <person name="Cruzado L."/>
            <person name="Jimenez J."/>
            <person name="Sanchez M."/>
            <person name="del Rey F."/>
            <person name="Benito J."/>
            <person name="Dominguez A."/>
            <person name="Revuelta J.L."/>
            <person name="Moreno S."/>
            <person name="Armstrong J."/>
            <person name="Forsburg S.L."/>
            <person name="Cerutti L."/>
            <person name="Lowe T."/>
            <person name="McCombie W.R."/>
            <person name="Paulsen I."/>
            <person name="Potashkin J."/>
            <person name="Shpakovski G.V."/>
            <person name="Ussery D."/>
            <person name="Barrell B.G."/>
            <person name="Nurse P."/>
        </authorList>
    </citation>
    <scope>NUCLEOTIDE SEQUENCE [LARGE SCALE GENOMIC DNA]</scope>
    <source>
        <strain>972 / ATCC 24843</strain>
    </source>
</reference>
<reference key="2">
    <citation type="journal article" date="2005" name="Yeast">
        <title>The cyclophilin repertoire of the fission yeast Schizosaccharomyces pombe.</title>
        <authorList>
            <person name="Pemberton T.J."/>
            <person name="Kay J.E."/>
        </authorList>
    </citation>
    <scope>SUBCELLULAR LOCATION</scope>
</reference>
<gene>
    <name type="primary">cyp3</name>
    <name type="ORF">SPBC1709.04c</name>
</gene>
<proteinExistence type="inferred from homology"/>